<comment type="function">
    <text evidence="2 3 7">Acyl-CoA synthetase; part of the gene cluster that mediates the biosynthesis of fumonisins B1 (FB1), B2 (FB2), B3 (FB3), and B4 (FB4), which are carcinogenic mycotoxins (PubMed:12620260, PubMed:17147424). Within the pathway, FUM10 is involved the addition of the tricarballylic moieties to the carbon backbone. FUM10 catalyzes the CoA activation of citrate to form tricarballylic acid (PubMed:17147424). The biosynthesis starts with the FUM1-catalyzed carbon chain assembly from one molecule of acetyl-CoA, eight molecules of malonyl-CoA, and two molecules of methionine (in S-adenosyl form). The C18 polyketide chain is released from the enzyme by a nucleophilic attack of a carbanion, which is derived from R-carbon of alanine by decarboxylation, on the carbonyl carbon of polyketide acyl chain. This step is catalyzed by the pyridoxal 5'-phosphate-dependent aminoacyl transferase FUM8. The resultant 3-keto intermediate is then stereospecifically reduced to a 3-hydroxyl product by reductase FUM13. Subsequent oxidations at C-10 by the cytochrome P450 monooxygenase FUM2, C-14 and C-15 by FUM6, FUM12 or FUM15, tricarballylic esterification of the hydroxyl groups on C-14 and C-15 by acyltransferase FUM14, and C-5 hydroxylation by 2-keto-glutarate-dependent dioxygenase FUM3 furnish the biosynthesis of fumonisins. The tricarballylic moieties are most likely derived from the citric acid cycle, and their addition to the carbon backbone may involve FUM7, FUM10, FUM11 and FUM14 (Probable).</text>
</comment>
<comment type="pathway">
    <text evidence="2 3">Mycotoxin biosynthesis.</text>
</comment>
<comment type="disruption phenotype">
    <text evidence="3">Impairs the ability to produce fumonisins, but accumulates two new metabolites, HFB3 and HFB4, which are biosynthetic precursors of fumonisins lacking the tricarballylic esters (PubMed:17147424).</text>
</comment>
<comment type="similarity">
    <text evidence="5">Belongs to the ATP-dependent AMP-binding enzyme family.</text>
</comment>
<comment type="sequence caution" evidence="5">
    <conflict type="erroneous gene model prediction">
        <sequence resource="EMBL-CDS" id="EWG36201"/>
    </conflict>
</comment>
<sequence>MDTLTHVLVLPEALERLDSPSIIIPRTANTSEEVVPYAHLTDLTQSLQHDLATLGISVGSKVAIVLPNGLAFVTVLLATIRQRAISAPIHPNSTREECKQIFSLMTPDLVAVMPSEASPAAAAVLAAQDLGLPVASCHRYPQSGRLSFCLALKLVNRGDETSNPSPCMVYSRDHVLAEDKVLELFTSGTTGAPKSVQLTHTNILVAMRIITSAHKITFKDRSFLITPLFHIIGIAGSLLPTLFTGGCAVIPASLPATFWQDCQDYSITWYHAVPTLHHLLLSFPMPKGGVPATLRFIRSGGSDMSLDLFNRLQKLGVPLLEVYGMTETAPAIFCNPFPVTETSTAIKRHPGQYPIPDAVDVMILPPERAPGLEPNGDLDGIENTEPVARLTKELGVKGEICLRGKNIMAGYTNNPAANREAFLPNGFFRTGDLGVIKPRQYLALIGRVKEIINKGGEKISPAEIEHVARLHDQVNDAACFRISDEIYGEVIGLAITAKSAITITAVKKHMRHHVVMFKVPDKVLLVQEIPYNRTGKPRRTLLSEMYDRGELA</sequence>
<keyword id="KW-0067">ATP-binding</keyword>
<keyword id="KW-0436">Ligase</keyword>
<keyword id="KW-0547">Nucleotide-binding</keyword>
<keyword id="KW-1185">Reference proteome</keyword>
<protein>
    <recommendedName>
        <fullName evidence="4">Acyl-CoA synthetase FUM10</fullName>
        <ecNumber evidence="6">6.2.1.-</ecNumber>
    </recommendedName>
    <alternativeName>
        <fullName evidence="4">Fumonisin biosynthesis cluster protein 10</fullName>
    </alternativeName>
</protein>
<reference key="1">
    <citation type="journal article" date="2003" name="Fungal Genet. Biol.">
        <title>Co-expression of 15 contiguous genes delineates a fumonisin biosynthetic gene cluster in Gibberella moniliformis.</title>
        <authorList>
            <person name="Proctor R.H."/>
            <person name="Brown D.W."/>
            <person name="Plattner R.D."/>
            <person name="Desjardins A.E."/>
        </authorList>
    </citation>
    <scope>NUCLEOTIDE SEQUENCE [GENOMIC DNA]</scope>
    <scope>PATHWAY</scope>
    <source>
        <strain>M3125 / FGSC 7600</strain>
    </source>
</reference>
<reference key="2">
    <citation type="journal article" date="2010" name="Nature">
        <title>Comparative genomics reveals mobile pathogenicity chromosomes in Fusarium.</title>
        <authorList>
            <person name="Ma L.-J."/>
            <person name="van der Does H.C."/>
            <person name="Borkovich K.A."/>
            <person name="Coleman J.J."/>
            <person name="Daboussi M.-J."/>
            <person name="Di Pietro A."/>
            <person name="Dufresne M."/>
            <person name="Freitag M."/>
            <person name="Grabherr M."/>
            <person name="Henrissat B."/>
            <person name="Houterman P.M."/>
            <person name="Kang S."/>
            <person name="Shim W.-B."/>
            <person name="Woloshuk C."/>
            <person name="Xie X."/>
            <person name="Xu J.-R."/>
            <person name="Antoniw J."/>
            <person name="Baker S.E."/>
            <person name="Bluhm B.H."/>
            <person name="Breakspear A."/>
            <person name="Brown D.W."/>
            <person name="Butchko R.A.E."/>
            <person name="Chapman S."/>
            <person name="Coulson R."/>
            <person name="Coutinho P.M."/>
            <person name="Danchin E.G.J."/>
            <person name="Diener A."/>
            <person name="Gale L.R."/>
            <person name="Gardiner D.M."/>
            <person name="Goff S."/>
            <person name="Hammond-Kosack K.E."/>
            <person name="Hilburn K."/>
            <person name="Hua-Van A."/>
            <person name="Jonkers W."/>
            <person name="Kazan K."/>
            <person name="Kodira C.D."/>
            <person name="Koehrsen M."/>
            <person name="Kumar L."/>
            <person name="Lee Y.-H."/>
            <person name="Li L."/>
            <person name="Manners J.M."/>
            <person name="Miranda-Saavedra D."/>
            <person name="Mukherjee M."/>
            <person name="Park G."/>
            <person name="Park J."/>
            <person name="Park S.-Y."/>
            <person name="Proctor R.H."/>
            <person name="Regev A."/>
            <person name="Ruiz-Roldan M.C."/>
            <person name="Sain D."/>
            <person name="Sakthikumar S."/>
            <person name="Sykes S."/>
            <person name="Schwartz D.C."/>
            <person name="Turgeon B.G."/>
            <person name="Wapinski I."/>
            <person name="Yoder O."/>
            <person name="Young S."/>
            <person name="Zeng Q."/>
            <person name="Zhou S."/>
            <person name="Galagan J."/>
            <person name="Cuomo C.A."/>
            <person name="Kistler H.C."/>
            <person name="Rep M."/>
        </authorList>
    </citation>
    <scope>NUCLEOTIDE SEQUENCE [LARGE SCALE GENOMIC DNA]</scope>
    <source>
        <strain>M3125 / FGSC 7600</strain>
    </source>
</reference>
<reference key="3">
    <citation type="journal article" date="2006" name="J. Agric. Food Chem.">
        <title>Deletion analysis of FUM genes involved in tricarballylic ester formation during fumonisin biosynthesis.</title>
        <authorList>
            <person name="Butchko R.A."/>
            <person name="Plattner R.D."/>
            <person name="Proctor R.H."/>
        </authorList>
    </citation>
    <scope>FUNCTION</scope>
    <scope>DISRUPTION PHENOTYPE</scope>
    <scope>PATHWAY</scope>
</reference>
<dbReference type="EC" id="6.2.1.-" evidence="6"/>
<dbReference type="EMBL" id="AF155773">
    <property type="protein sequence ID" value="AAN74813.2"/>
    <property type="molecule type" value="Genomic_DNA"/>
</dbReference>
<dbReference type="EMBL" id="CM000578">
    <property type="protein sequence ID" value="EWG36201.1"/>
    <property type="status" value="ALT_SEQ"/>
    <property type="molecule type" value="Genomic_DNA"/>
</dbReference>
<dbReference type="RefSeq" id="XP_018742392.1">
    <property type="nucleotide sequence ID" value="XM_018886758.1"/>
</dbReference>
<dbReference type="SMR" id="Q8J2R0"/>
<dbReference type="STRING" id="334819.Q8J2R0"/>
<dbReference type="GeneID" id="30058698"/>
<dbReference type="KEGG" id="fvr:FVEG_00321"/>
<dbReference type="eggNOG" id="KOG1176">
    <property type="taxonomic scope" value="Eukaryota"/>
</dbReference>
<dbReference type="OrthoDB" id="20572at110618"/>
<dbReference type="Proteomes" id="UP000009096">
    <property type="component" value="Chromosome 1"/>
</dbReference>
<dbReference type="GO" id="GO:0005524">
    <property type="term" value="F:ATP binding"/>
    <property type="evidence" value="ECO:0007669"/>
    <property type="project" value="UniProtKB-KW"/>
</dbReference>
<dbReference type="GO" id="GO:0031956">
    <property type="term" value="F:medium-chain fatty acid-CoA ligase activity"/>
    <property type="evidence" value="ECO:0007669"/>
    <property type="project" value="TreeGrafter"/>
</dbReference>
<dbReference type="GO" id="GO:0006631">
    <property type="term" value="P:fatty acid metabolic process"/>
    <property type="evidence" value="ECO:0007669"/>
    <property type="project" value="TreeGrafter"/>
</dbReference>
<dbReference type="GO" id="GO:1900541">
    <property type="term" value="P:fumonisin biosynthetic process"/>
    <property type="evidence" value="ECO:0000315"/>
    <property type="project" value="GO_Central"/>
</dbReference>
<dbReference type="CDD" id="cd05926">
    <property type="entry name" value="FACL_fum10p_like"/>
    <property type="match status" value="1"/>
</dbReference>
<dbReference type="Gene3D" id="3.30.300.30">
    <property type="match status" value="1"/>
</dbReference>
<dbReference type="Gene3D" id="3.40.50.12780">
    <property type="entry name" value="N-terminal domain of ligase-like"/>
    <property type="match status" value="1"/>
</dbReference>
<dbReference type="InterPro" id="IPR025110">
    <property type="entry name" value="AMP-bd_C"/>
</dbReference>
<dbReference type="InterPro" id="IPR045851">
    <property type="entry name" value="AMP-bd_C_sf"/>
</dbReference>
<dbReference type="InterPro" id="IPR000873">
    <property type="entry name" value="AMP-dep_synth/lig_dom"/>
</dbReference>
<dbReference type="InterPro" id="IPR042099">
    <property type="entry name" value="ANL_N_sf"/>
</dbReference>
<dbReference type="InterPro" id="IPR045310">
    <property type="entry name" value="Pcs60-like"/>
</dbReference>
<dbReference type="PANTHER" id="PTHR43201">
    <property type="entry name" value="ACYL-COA SYNTHETASE"/>
    <property type="match status" value="1"/>
</dbReference>
<dbReference type="PANTHER" id="PTHR43201:SF5">
    <property type="entry name" value="MEDIUM-CHAIN ACYL-COA LIGASE ACSF2, MITOCHONDRIAL"/>
    <property type="match status" value="1"/>
</dbReference>
<dbReference type="Pfam" id="PF00501">
    <property type="entry name" value="AMP-binding"/>
    <property type="match status" value="1"/>
</dbReference>
<dbReference type="Pfam" id="PF13193">
    <property type="entry name" value="AMP-binding_C"/>
    <property type="match status" value="1"/>
</dbReference>
<dbReference type="SUPFAM" id="SSF56801">
    <property type="entry name" value="Acetyl-CoA synthetase-like"/>
    <property type="match status" value="1"/>
</dbReference>
<proteinExistence type="inferred from homology"/>
<accession>Q8J2R0</accession>
<accession>W7LC85</accession>
<evidence type="ECO:0000255" key="1"/>
<evidence type="ECO:0000269" key="2">
    <source>
    </source>
</evidence>
<evidence type="ECO:0000269" key="3">
    <source>
    </source>
</evidence>
<evidence type="ECO:0000303" key="4">
    <source>
    </source>
</evidence>
<evidence type="ECO:0000305" key="5"/>
<evidence type="ECO:0000305" key="6">
    <source>
    </source>
</evidence>
<evidence type="ECO:0000305" key="7">
    <source>
    </source>
</evidence>
<name>FUM10_GIBM7</name>
<organism>
    <name type="scientific">Gibberella moniliformis (strain M3125 / FGSC 7600)</name>
    <name type="common">Maize ear and stalk rot fungus</name>
    <name type="synonym">Fusarium verticillioides</name>
    <dbReference type="NCBI Taxonomy" id="334819"/>
    <lineage>
        <taxon>Eukaryota</taxon>
        <taxon>Fungi</taxon>
        <taxon>Dikarya</taxon>
        <taxon>Ascomycota</taxon>
        <taxon>Pezizomycotina</taxon>
        <taxon>Sordariomycetes</taxon>
        <taxon>Hypocreomycetidae</taxon>
        <taxon>Hypocreales</taxon>
        <taxon>Nectriaceae</taxon>
        <taxon>Fusarium</taxon>
        <taxon>Fusarium fujikuroi species complex</taxon>
    </lineage>
</organism>
<gene>
    <name evidence="4" type="primary">FUM10</name>
    <name type="ORF">FVEG_00321</name>
</gene>
<feature type="chain" id="PRO_0000441148" description="Acyl-CoA synthetase FUM10">
    <location>
        <begin position="1"/>
        <end position="552"/>
    </location>
</feature>
<feature type="region of interest" description="AMP-binding" evidence="1">
    <location>
        <begin position="463"/>
        <end position="536"/>
    </location>
</feature>
<feature type="binding site" evidence="1">
    <location>
        <begin position="183"/>
        <end position="194"/>
    </location>
    <ligand>
        <name>AMP</name>
        <dbReference type="ChEBI" id="CHEBI:456215"/>
    </ligand>
</feature>